<gene>
    <name type="primary">Cspg4</name>
    <name type="synonym">Ng2</name>
</gene>
<organism>
    <name type="scientific">Rattus norvegicus</name>
    <name type="common">Rat</name>
    <dbReference type="NCBI Taxonomy" id="10116"/>
    <lineage>
        <taxon>Eukaryota</taxon>
        <taxon>Metazoa</taxon>
        <taxon>Chordata</taxon>
        <taxon>Craniata</taxon>
        <taxon>Vertebrata</taxon>
        <taxon>Euteleostomi</taxon>
        <taxon>Mammalia</taxon>
        <taxon>Eutheria</taxon>
        <taxon>Euarchontoglires</taxon>
        <taxon>Glires</taxon>
        <taxon>Rodentia</taxon>
        <taxon>Myomorpha</taxon>
        <taxon>Muroidea</taxon>
        <taxon>Muridae</taxon>
        <taxon>Murinae</taxon>
        <taxon>Rattus</taxon>
    </lineage>
</organism>
<comment type="function">
    <text evidence="8 10 12 13 14 17 21">Proteoglycan playing a role in cell proliferation and migration which stimulates endothelial cells motility during microvascular morphogenesis. May also inhibit neurite outgrowth and growth cone collapse during axon regeneration. Cell surface receptor for collagen alpha 2(VI) which may confer cells ability to migrate on that substrate. Binds through its extracellular N-terminus growth factors, extracellular matrix proteases modulating their activity. May regulate MPP16-dependent degradation and invasion of type I collagen participating in melanoma cells invasion properties. May modulate the plasminogen system by enhancing plasminogen activation and inhibiting angiostatin. Also functions as a signal transducing protein by binding through its cytoplasmic C-terminus scaffolding and signaling proteins. May promote retraction fiber formation and cell polarization through Rho GTPase activation. May stimulate alpha-4, beta-1 integrin-mediated adhesion and spreading by recruiting and activating a signaling cascade through CDC42, ACK1 and BCAR1. May activate FAK and ERK1/ERK2 signaling cascades.</text>
</comment>
<comment type="subunit">
    <text evidence="1 7 8 9 13 14 16 17 19 20 21">Interacts with GRIP1, GRIP2 and GRIA2. Forms a ternary complex with GRIP1 and GRIA2. Interacts with ITGA4 through its chondroitin sulfate glycosaminoglycan. Interacts with BCAR1, CDC42 and ACK1. Interacts with MMP16 (By similarity). Interacts with the first PDZ domain of MPDZ. Interacts with PRKCA. Interacts with LGALS3 and the integrin composed of ITGB1 and ITGA3. Binds TNC, laminin-1, COL5A1 and COL6A2. Interacts with PLG and angiostatin. Binds FGF2 and PDGFA.</text>
</comment>
<comment type="subcellular location">
    <subcellularLocation>
        <location evidence="14 15">Cell membrane</location>
        <topology evidence="15">Single-pass type I membrane protein</topology>
        <orientation evidence="15">Extracellular side</orientation>
    </subcellularLocation>
    <subcellularLocation>
        <location evidence="14">Apical cell membrane</location>
        <topology evidence="15">Single-pass type I membrane protein</topology>
        <orientation evidence="15">Extracellular side</orientation>
    </subcellularLocation>
    <subcellularLocation>
        <location evidence="14">Cell projection</location>
        <location evidence="14">Lamellipodium membrane</location>
        <topology evidence="15">Single-pass type I membrane protein</topology>
        <orientation evidence="15">Extracellular side</orientation>
    </subcellularLocation>
    <subcellularLocation>
        <location evidence="16 17 18">Cell surface</location>
    </subcellularLocation>
    <text evidence="2 10 14">Localizes to the plasma membrane of oligodendrocytes (By similarity). Localized at the apical plasma membrane it relocalizes to the lamellipodia of astrocytoma upon phosphorylation by PRKCA (PubMed:15504744). Localizes to the retraction fibers (PubMed:11493670). A fraction may undergo cell surface proteolysis and secretion.</text>
</comment>
<comment type="tissue specificity">
    <text>Neural cells and also extraneural tissues, especially in the developing mesenchyme.</text>
</comment>
<comment type="developmental stage">
    <text>The level of expression is highest on immature, proliferating cells and decreases as these cells differentiate.</text>
</comment>
<comment type="PTM">
    <text>N-glycosylated.</text>
</comment>
<comment type="PTM">
    <text>O-glycosylated; contains glycosaminoglycan chondroitin sulfate which are required for proper localization and function in stress fiber formation. Involved in interaction with MMP16 and ITGA4.</text>
</comment>
<comment type="PTM">
    <text evidence="14">Phosphorylation by PRKCA regulates its subcellular location and function in cell motility.</text>
</comment>
<comment type="miscellaneous">
    <text>Valuable marker for several incompletely differentiated precursor cells.</text>
</comment>
<dbReference type="EMBL" id="X56541">
    <property type="protein sequence ID" value="CAA39884.2"/>
    <property type="molecule type" value="mRNA"/>
</dbReference>
<dbReference type="PIR" id="S16025">
    <property type="entry name" value="A61208"/>
</dbReference>
<dbReference type="RefSeq" id="NP_112284.1">
    <property type="nucleotide sequence ID" value="NM_031022.1"/>
</dbReference>
<dbReference type="SMR" id="Q00657"/>
<dbReference type="BioGRID" id="249551">
    <property type="interactions" value="1"/>
</dbReference>
<dbReference type="FunCoup" id="Q00657">
    <property type="interactions" value="532"/>
</dbReference>
<dbReference type="STRING" id="10116.ENSRNOP00000023326"/>
<dbReference type="GlyCosmos" id="Q00657">
    <property type="glycosylation" value="16 sites, No reported glycans"/>
</dbReference>
<dbReference type="GlyGen" id="Q00657">
    <property type="glycosylation" value="19 sites"/>
</dbReference>
<dbReference type="iPTMnet" id="Q00657"/>
<dbReference type="PhosphoSitePlus" id="Q00657"/>
<dbReference type="SwissPalm" id="Q00657"/>
<dbReference type="PaxDb" id="10116-ENSRNOP00000023326"/>
<dbReference type="ABCD" id="Q00657">
    <property type="antibodies" value="8 sequenced antibodies"/>
</dbReference>
<dbReference type="GeneID" id="81651"/>
<dbReference type="KEGG" id="rno:81651"/>
<dbReference type="UCSC" id="RGD:619942">
    <property type="organism name" value="rat"/>
</dbReference>
<dbReference type="AGR" id="RGD:619942"/>
<dbReference type="CTD" id="1464"/>
<dbReference type="RGD" id="619942">
    <property type="gene designation" value="Cspg4"/>
</dbReference>
<dbReference type="eggNOG" id="KOG3597">
    <property type="taxonomic scope" value="Eukaryota"/>
</dbReference>
<dbReference type="InParanoid" id="Q00657"/>
<dbReference type="PhylomeDB" id="Q00657"/>
<dbReference type="Reactome" id="R-RNO-1971475">
    <property type="pathway name" value="A tetrasaccharide linker sequence is required for GAG synthesis"/>
</dbReference>
<dbReference type="Reactome" id="R-RNO-2022870">
    <property type="pathway name" value="Chondroitin sulfate biosynthesis"/>
</dbReference>
<dbReference type="Reactome" id="R-RNO-2022923">
    <property type="pathway name" value="Dermatan sulfate biosynthesis"/>
</dbReference>
<dbReference type="Reactome" id="R-RNO-2024101">
    <property type="pathway name" value="CS/DS degradation"/>
</dbReference>
<dbReference type="PRO" id="PR:Q00657"/>
<dbReference type="Proteomes" id="UP000002494">
    <property type="component" value="Unplaced"/>
</dbReference>
<dbReference type="GO" id="GO:0016324">
    <property type="term" value="C:apical plasma membrane"/>
    <property type="evidence" value="ECO:0007669"/>
    <property type="project" value="UniProtKB-SubCell"/>
</dbReference>
<dbReference type="GO" id="GO:0042995">
    <property type="term" value="C:cell projection"/>
    <property type="evidence" value="ECO:0000266"/>
    <property type="project" value="RGD"/>
</dbReference>
<dbReference type="GO" id="GO:0009986">
    <property type="term" value="C:cell surface"/>
    <property type="evidence" value="ECO:0007669"/>
    <property type="project" value="UniProtKB-SubCell"/>
</dbReference>
<dbReference type="GO" id="GO:0031258">
    <property type="term" value="C:lamellipodium membrane"/>
    <property type="evidence" value="ECO:0007669"/>
    <property type="project" value="UniProtKB-SubCell"/>
</dbReference>
<dbReference type="GO" id="GO:0005886">
    <property type="term" value="C:plasma membrane"/>
    <property type="evidence" value="ECO:0000266"/>
    <property type="project" value="RGD"/>
</dbReference>
<dbReference type="GO" id="GO:0001726">
    <property type="term" value="C:ruffle"/>
    <property type="evidence" value="ECO:0000266"/>
    <property type="project" value="RGD"/>
</dbReference>
<dbReference type="GO" id="GO:0005518">
    <property type="term" value="F:collagen binding"/>
    <property type="evidence" value="ECO:0000353"/>
    <property type="project" value="UniProtKB"/>
</dbReference>
<dbReference type="GO" id="GO:0015026">
    <property type="term" value="F:coreceptor activity"/>
    <property type="evidence" value="ECO:0000266"/>
    <property type="project" value="RGD"/>
</dbReference>
<dbReference type="GO" id="GO:0019901">
    <property type="term" value="F:protein kinase binding"/>
    <property type="evidence" value="ECO:0000266"/>
    <property type="project" value="RGD"/>
</dbReference>
<dbReference type="GO" id="GO:0001525">
    <property type="term" value="P:angiogenesis"/>
    <property type="evidence" value="ECO:0007669"/>
    <property type="project" value="UniProtKB-KW"/>
</dbReference>
<dbReference type="GO" id="GO:0008347">
    <property type="term" value="P:glial cell migration"/>
    <property type="evidence" value="ECO:0000266"/>
    <property type="project" value="RGD"/>
</dbReference>
<dbReference type="GO" id="GO:0035556">
    <property type="term" value="P:intracellular signal transduction"/>
    <property type="evidence" value="ECO:0000266"/>
    <property type="project" value="RGD"/>
</dbReference>
<dbReference type="GO" id="GO:0010977">
    <property type="term" value="P:negative regulation of neuron projection development"/>
    <property type="evidence" value="ECO:0000315"/>
    <property type="project" value="RGD"/>
</dbReference>
<dbReference type="GO" id="GO:0016322">
    <property type="term" value="P:neuron remodeling"/>
    <property type="evidence" value="ECO:0000314"/>
    <property type="project" value="RGD"/>
</dbReference>
<dbReference type="GO" id="GO:0048008">
    <property type="term" value="P:platelet-derived growth factor receptor signaling pathway"/>
    <property type="evidence" value="ECO:0000266"/>
    <property type="project" value="RGD"/>
</dbReference>
<dbReference type="GO" id="GO:0043410">
    <property type="term" value="P:positive regulation of MAPK cascade"/>
    <property type="evidence" value="ECO:0000266"/>
    <property type="project" value="RGD"/>
</dbReference>
<dbReference type="GO" id="GO:0097178">
    <property type="term" value="P:ruffle assembly"/>
    <property type="evidence" value="ECO:0000266"/>
    <property type="project" value="RGD"/>
</dbReference>
<dbReference type="GO" id="GO:0006929">
    <property type="term" value="P:substrate-dependent cell migration"/>
    <property type="evidence" value="ECO:0000266"/>
    <property type="project" value="RGD"/>
</dbReference>
<dbReference type="GO" id="GO:0048771">
    <property type="term" value="P:tissue remodeling"/>
    <property type="evidence" value="ECO:0007669"/>
    <property type="project" value="UniProtKB-KW"/>
</dbReference>
<dbReference type="CDD" id="cd00110">
    <property type="entry name" value="LamG"/>
    <property type="match status" value="2"/>
</dbReference>
<dbReference type="FunFam" id="2.60.120.200:FF:000158">
    <property type="entry name" value="Chondroitin sulfate proteoglycan 4"/>
    <property type="match status" value="1"/>
</dbReference>
<dbReference type="FunFam" id="2.60.120.200:FF:000248">
    <property type="entry name" value="Chondroitin sulfate proteoglycan 4"/>
    <property type="match status" value="1"/>
</dbReference>
<dbReference type="Gene3D" id="2.60.120.200">
    <property type="match status" value="2"/>
</dbReference>
<dbReference type="InterPro" id="IPR013320">
    <property type="entry name" value="ConA-like_dom_sf"/>
</dbReference>
<dbReference type="InterPro" id="IPR039005">
    <property type="entry name" value="CSPG_rpt"/>
</dbReference>
<dbReference type="InterPro" id="IPR051561">
    <property type="entry name" value="FRAS1_ECM"/>
</dbReference>
<dbReference type="InterPro" id="IPR001791">
    <property type="entry name" value="Laminin_G"/>
</dbReference>
<dbReference type="PANTHER" id="PTHR45739:SF13">
    <property type="entry name" value="CHONDROITIN SULFATE PROTEOGLYCAN 4"/>
    <property type="match status" value="1"/>
</dbReference>
<dbReference type="PANTHER" id="PTHR45739">
    <property type="entry name" value="MATRIX PROTEIN, PUTATIVE-RELATED"/>
    <property type="match status" value="1"/>
</dbReference>
<dbReference type="Pfam" id="PF16184">
    <property type="entry name" value="Cadherin_3"/>
    <property type="match status" value="12"/>
</dbReference>
<dbReference type="Pfam" id="PF00054">
    <property type="entry name" value="Laminin_G_1"/>
    <property type="match status" value="1"/>
</dbReference>
<dbReference type="Pfam" id="PF02210">
    <property type="entry name" value="Laminin_G_2"/>
    <property type="match status" value="1"/>
</dbReference>
<dbReference type="SMART" id="SM00282">
    <property type="entry name" value="LamG"/>
    <property type="match status" value="2"/>
</dbReference>
<dbReference type="SUPFAM" id="SSF49899">
    <property type="entry name" value="Concanavalin A-like lectins/glucanases"/>
    <property type="match status" value="2"/>
</dbReference>
<dbReference type="PROSITE" id="PS51854">
    <property type="entry name" value="CSPG"/>
    <property type="match status" value="15"/>
</dbReference>
<dbReference type="PROSITE" id="PS50025">
    <property type="entry name" value="LAM_G_DOMAIN"/>
    <property type="match status" value="2"/>
</dbReference>
<sequence>MLLSPGHPLSAPALALILTLALLVRSTAPASFFGENHLEVPVPSALTRVDLLLQFSTSQPEALLLLAAGQTDHLLLQLQSGHLQVRLALGQNELSLQTPADTVLSDSTTHTVVLTVSNSWAVLSVDGVLNTSAPIPKASHLKVPYGLFVGSSGSLDLPYLKGISRPLRGCLHSAILNGRNLLRPLTPDVHEGCAEEFSAGDEVGLGFSGPHSLAAFPAWSTREEGTLEFTLTTRSQQAPLAFQAGDKRGNFIYVDIFEGHLRAVVEKGQGTMLLRNSVPVADGQPHEVSVHIDVHRLEISVDQYPTRTFNRGVLSYLEPRGSLLLGGLDTEASRHLQEHRLGLTPGAANISLVGCIEDFSVNGRRLGLRDAWLTRDMAAGCRPEEDEYEEEVYGPFEAFSTLAPEAWPVMDLPEPCVPEPGLPAVFANFTQLLTISPLVVAEGGTAWLEWRHVQPTLDLTEAELRKSQVLFSVSQGARHGELELDIPGAQTRKMFTLLDVVNRKARFVHDGSEDTSDQLMLEVSVTSRAPVPSCLRRGQIYILPIQVNPVNDPPRIVFPHGSLMVILEHTQKPLGPEIFQAYDPDSACEGLTIQLLGVSASVPVEHRDQPGEPVTEFSCRDLEAGNIVYVHRGGPAQDLTFRVSDGMQASGPATLKVVAVRPAIQILHNTGLRLAQGSAAAILPANLSVETNAVGQDVSVLFRVTGTLQFGELQKQGAGGVEGTEWWDTLAFHQRDVEQGRVRYLSTDPQHHTQDTVEDLTLEVQVGQETLSNLSFPVTIQRATVWMLQLEPLHTQNPHQETLTSAHLEASLEEEGEGGPYPHIFHYELVQAPRRGNLLLQGTRLSDGQSFSQSDLQAGRVTYRATTRTSEAAEDSFRFRVTSPPHFSPLYTFPIHIGGDPNAPVLTNVLLMVPEGGEGVLSADHLFVKSLNSASYLYEVMEQPHHGSLAWRDPKGRATPVTSFTNEDLLHGRLVYQHDDSETIEDDIPFVATRQGEGSGDMAWEEVRGVFRVAIQPVNDHAPVQTISRVFHVARGGQRLLTTDDVAFSDADSGFSDAQLVLTRKDLLFGSIVAMEEPTRPIYRFTQEDLRKKQVLFVHSGADHGWLQLQVSDGQHQATAMLEVQASEPYLHVANSSSLVVPQGGQGTIDTAVLHLDTNLDIRSGNEVHYHVTAGPHWGQLLRDGQSVTSFSQRDLLDGAILYSHNGSLSPQDTLALSVAAGPVHTSTVLQVTIALEGPLAPLQLVQHKRIYVFQGEAAEIRRDQLEVVQEAVLPADIMFSLRSPPNAGYLVMVSHGASADGPPSLDPVQRFSQEAINSGRVLYLHSRPGAWSDSFSLDVASGLGDPLEGISVELEVLPTVIPLDVQNFSVPEGGTRTLAPPLIQITGPYLGTLPGLVLQVLEPPQHGALQKEDRPQDGTLSTFSWREVEEQLIRYVHDGSETQTDGFILLANASEMDRQSQPMAFTITILPVNDQPPVITTNTGLQIWEGAIVPIPPEALRGIDSDSGPEDLVYTIEQPSNGRIALRVAPDAEAHRFTQAQLDSGLVLFSHRGALEGGFHFDLSDGVHTSPGHFFRVVAQKQVLLSLEGSRKLTVCPESVQPLSSQSLSASSSTGSDPRHLLYQVVRGPQLGRLLHAQQGSAEEALVNFTQAEVNAGNILYEHEISSEPFWEAHDTIGLLLSSSPARDLAATLAVTVSFDAACPQRPSRLWRNKGLWVPEGQRAKITVAALDAANLLASVPASQRGRHDVLFQITQFPTRGQLLVSEEPLHARRPHFLQSELTAGQLVYAHGGGGTQQDGFRFRAHLQGPTGASVAGPQTSEAFVITVRDVNERPPQPQASIPLRITRGSRAPVSRAQLSVVDPDSAPGEIEYEVQRAPHNGFLSLAGDNTGPVTHFTQADVDAGRLAFVANGSSVAGVFQLSMSDGASPPIPMSLAVDVLPSTIEVQLRAPLEVPQALGRSSLSRQQLQVISDREEPDVAYRLTQGPLYGQVLVGGQPASAFSQLQVDQGDVVFAFTNFSSSQDHFKVLALARGVNASATVNVTVQALLHVWAGGPWPQGTTLRLDPTVLDASELANRTGSMPRFRLLEGPRYGRVVRVSQGRAESRTNQLVEDFTQQDLEEGRLGLEVGRPEGRSTGPTGDRLTLELQATGVPPAVALLDFATEPYHAAKFYKVTLLSVPEAARTETEKTGKSTPTGQPGQAASSPMPTVAKSGFLGFLEANMFSVIIPVCLVLLLLALILPLLFYLRKRNKTGKHDVQVLTAKPRNGLAGDTETFRKVEPGQAIPLTTVPGQGPPPGGQPDPELLQFCRTPNPALRNGQYWV</sequence>
<reference key="1">
    <citation type="journal article" date="1991" name="J. Cell Biol.">
        <title>The primary structure of NG2, a novel membrane-spanning proteoglycan.</title>
        <authorList>
            <person name="Nishiyama A."/>
            <person name="Dahlin K.J."/>
            <person name="Prince J.T."/>
            <person name="Johnstone S.R."/>
            <person name="Stallcup W.B."/>
        </authorList>
    </citation>
    <scope>NUCLEOTIDE SEQUENCE [MRNA]</scope>
    <scope>PROTEIN SEQUENCE OF 30-47; 1011-1016 AND 1466-1477</scope>
    <scope>SUBCELLULAR LOCATION</scope>
    <scope>TOPOLOGY</scope>
    <scope>GLYCOSYLATION</scope>
    <source>
        <tissue>Neuron</tissue>
    </source>
</reference>
<reference key="2">
    <citation type="journal article" date="1999" name="J. Cell Biol.">
        <authorList>
            <person name="Nishiyama A."/>
            <person name="Dahlin K.J."/>
            <person name="Prince J.T."/>
            <person name="Johnstone S.R."/>
            <person name="Stallcup W.B."/>
        </authorList>
    </citation>
    <scope>SEQUENCE REVISION TO 2047-2096</scope>
</reference>
<reference key="3">
    <citation type="journal article" date="1994" name="Int. J. Cancer">
        <title>The chondroitin sulfate proteoglycan NG2 is a tumour-specific antigen on the chemically induced rat chondrosarcoma HSN.</title>
        <authorList>
            <person name="Leger O."/>
            <person name="Johnson-Leger C."/>
            <person name="Jackson E."/>
            <person name="Coles B."/>
            <person name="Dean C."/>
        </authorList>
    </citation>
    <scope>NUCLEOTIDE SEQUENCE [MRNA]</scope>
    <scope>PROTEIN SEQUENCE OF 556-573 AND 657-667</scope>
</reference>
<reference key="4">
    <citation type="journal article" date="1990" name="J. Cell Biol.">
        <title>Interaction of the NG2 chondroitin sulfate proteoglycan with type VI collagen.</title>
        <authorList>
            <person name="Stallcup W.B."/>
            <person name="Dahlin K."/>
            <person name="Healy P."/>
        </authorList>
    </citation>
    <scope>INTERACTION WITH COL6A2</scope>
    <scope>SUBCELLULAR LOCATION</scope>
</reference>
<reference key="5">
    <citation type="journal article" date="1993" name="Mol. Biol. Cell">
        <title>Expression of NG2 proteoglycan causes retention of type VI collagen on the cell surface.</title>
        <authorList>
            <person name="Nishiyama A."/>
            <person name="Stallcup W.B."/>
        </authorList>
    </citation>
    <scope>INTERACTION WITH COL6A2</scope>
    <scope>SUBCELLULAR LOCATION</scope>
    <scope>FUNCTION</scope>
</reference>
<reference key="6">
    <citation type="journal article" date="1995" name="Mol. Biol. Cell">
        <title>Generation of truncated forms of the NG2 proteoglycan by cell surface proteolysis.</title>
        <authorList>
            <person name="Nishiyama A."/>
            <person name="Lin X.-H."/>
            <person name="Stallcup W.B."/>
        </authorList>
    </citation>
    <scope>SUBCELLULAR LOCATION</scope>
</reference>
<reference key="7">
    <citation type="journal article" date="1996" name="J. Biol. Chem.">
        <title>Binding of the NG2 proteoglycan to type VI collagen and other extracellular matrix molecules.</title>
        <authorList>
            <person name="Burg M.A."/>
            <person name="Tillet E."/>
            <person name="Timpl R."/>
            <person name="Stallcup W.B."/>
        </authorList>
    </citation>
    <scope>INTERACTION WITH COL5A1; COL6A2; TNC AND LAMININ-1</scope>
</reference>
<reference key="8">
    <citation type="journal article" date="1997" name="Exp. Cell Res.">
        <title>A central segment of the NG2 proteoglycan is critical for the ability of glioma cells to bind and migrate toward type VI collagen.</title>
        <authorList>
            <person name="Burg M.A."/>
            <person name="Nishiyama A."/>
            <person name="Stallcup W.B."/>
        </authorList>
    </citation>
    <scope>INTERACTION WITH COL6A2</scope>
    <scope>GLYCOSYLATION</scope>
    <scope>DOMAIN</scope>
    <scope>FUNCTION</scope>
</reference>
<reference key="9">
    <citation type="journal article" date="1997" name="J. Biol. Chem.">
        <title>The membrane-spanning proteoglycan NG2 binds to collagens V and VI through the central nonglobular domain of its core protein.</title>
        <authorList>
            <person name="Tillet E."/>
            <person name="Ruggiero F."/>
            <person name="Nishiyama A."/>
            <person name="Stallcup W.B."/>
        </authorList>
    </citation>
    <scope>INTERACTION WITH COL5A1 AND COL6A2</scope>
    <scope>DOMAIN</scope>
</reference>
<reference key="10">
    <citation type="journal article" date="1999" name="J. Biol. Chem.">
        <title>High-affinity binding of basic fibroblast growth factor and platelet-derived growth factor-AA to the core protein of the NG2 proteoglycan.</title>
        <authorList>
            <person name="Goretzki L."/>
            <person name="Burg M.A."/>
            <person name="Grako K.A."/>
            <person name="Stallcup W.B."/>
        </authorList>
    </citation>
    <scope>INTERACTION WITH FGF2 AND PDGFA</scope>
</reference>
<reference key="11">
    <citation type="journal article" date="2000" name="J. Biol. Chem.">
        <title>Binding of the NG2 proteoglycan to kringle domains modulates the functional properties of angiostatin and plasmin(ogen).</title>
        <authorList>
            <person name="Goretzki L."/>
            <person name="Lombardo C.R."/>
            <person name="Stallcup W.B."/>
        </authorList>
    </citation>
    <scope>INTERACTION WITH PLG</scope>
    <scope>FUNCTION</scope>
</reference>
<reference key="12">
    <citation type="journal article" date="2000" name="J. Cell. Biochem.">
        <title>The multi-PDZ domain protein MUPP1 is a cytoplasmic ligand for the membrane-spanning proteoglycan NG2.</title>
        <authorList>
            <person name="Barritt D.S."/>
            <person name="Pearn M.T."/>
            <person name="Zisch A.H."/>
            <person name="Lee S.S."/>
            <person name="Javier R.T."/>
            <person name="Pasquale E.B."/>
            <person name="Stallcup W.B."/>
        </authorList>
    </citation>
    <scope>INTERACTION WITH MPDZ</scope>
</reference>
<reference key="13">
    <citation type="journal article" date="2001" name="J. Cell Sci.">
        <title>Chondroitin sulfate and cytoplasmic domain-dependent membrane targeting of the NG2 proteoglycan promotes retraction fiber formation and cell polarization.</title>
        <authorList>
            <person name="Stallcup W.B."/>
            <person name="Dahlin-Huppe K."/>
        </authorList>
    </citation>
    <scope>MUTAGENESIS OF SER-999 AND SER-1342</scope>
    <scope>SUBCELLULAR LOCATION</scope>
    <scope>GLYCOSYLATION AT SER-999</scope>
    <scope>FUNCTION</scope>
</reference>
<reference key="14">
    <citation type="journal article" date="2002" name="FEBS Lett.">
        <title>A novel repeat in the melanoma-associated chondroitin sulfate proteoglycan defines a new protein family.</title>
        <authorList>
            <person name="Staub E."/>
            <person name="Hinzmann B."/>
            <person name="Rosenthal A."/>
        </authorList>
    </citation>
    <scope>IDENTIFICATION OF CSPG REPEATS</scope>
</reference>
<reference key="15">
    <citation type="journal article" date="2003" name="J. Neurosci.">
        <title>Multiple regions of the NG2 proteoglycan inhibit neurite growth and induce growth cone collapse.</title>
        <authorList>
            <person name="Ughrin Y.M."/>
            <person name="Chen Z.J."/>
            <person name="Levine J.M."/>
        </authorList>
    </citation>
    <scope>DOMAINS</scope>
    <scope>FUNCTION</scope>
</reference>
<reference key="16">
    <citation type="journal article" date="2004" name="J. Biol. Chem.">
        <title>Phosphorylation of NG2 proteoglycan by protein kinase C-alpha regulates polarized membrane distribution and cell motility.</title>
        <authorList>
            <person name="Makagiansar I.T."/>
            <person name="Williams S."/>
            <person name="Dahlin-Huppe K."/>
            <person name="Fukushi J."/>
            <person name="Mustelin T."/>
            <person name="Stallcup W.B."/>
        </authorList>
    </citation>
    <scope>PHOSPHORYLATION AT THR-2256</scope>
    <scope>INTERACTION WITH PRKCA</scope>
    <scope>SUBCELLULAR LOCATION</scope>
    <scope>MUTAGENESIS OF THR-2256; THR-2265 AND THR-2278</scope>
    <scope>FUNCTION</scope>
</reference>
<reference key="17">
    <citation type="journal article" date="2004" name="Mol. Biol. Cell">
        <title>NG2 proteoglycan promotes endothelial cell motility and angiogenesis via engagement of galectin-3 and alpha3beta1 integrin.</title>
        <authorList>
            <person name="Fukushi J."/>
            <person name="Makagiansar I.T."/>
            <person name="Stallcup W.B."/>
        </authorList>
    </citation>
    <scope>INTERACTION WITH LGALS3; ITGB1 AND ITGA3</scope>
    <scope>FUNCTION</scope>
</reference>
<evidence type="ECO:0000250" key="1"/>
<evidence type="ECO:0000250" key="2">
    <source>
        <dbReference type="UniProtKB" id="Q8VHY0"/>
    </source>
</evidence>
<evidence type="ECO:0000255" key="3"/>
<evidence type="ECO:0000255" key="4">
    <source>
        <dbReference type="PROSITE-ProRule" id="PRU00122"/>
    </source>
</evidence>
<evidence type="ECO:0000255" key="5">
    <source>
        <dbReference type="PROSITE-ProRule" id="PRU01201"/>
    </source>
</evidence>
<evidence type="ECO:0000256" key="6">
    <source>
        <dbReference type="SAM" id="MobiDB-lite"/>
    </source>
</evidence>
<evidence type="ECO:0000269" key="7">
    <source>
    </source>
</evidence>
<evidence type="ECO:0000269" key="8">
    <source>
    </source>
</evidence>
<evidence type="ECO:0000269" key="9">
    <source>
    </source>
</evidence>
<evidence type="ECO:0000269" key="10">
    <source>
    </source>
</evidence>
<evidence type="ECO:0000269" key="11">
    <source>
    </source>
</evidence>
<evidence type="ECO:0000269" key="12">
    <source>
    </source>
</evidence>
<evidence type="ECO:0000269" key="13">
    <source>
    </source>
</evidence>
<evidence type="ECO:0000269" key="14">
    <source>
    </source>
</evidence>
<evidence type="ECO:0000269" key="15">
    <source>
    </source>
</evidence>
<evidence type="ECO:0000269" key="16">
    <source>
    </source>
</evidence>
<evidence type="ECO:0000269" key="17">
    <source>
    </source>
</evidence>
<evidence type="ECO:0000269" key="18">
    <source>
    </source>
</evidence>
<evidence type="ECO:0000269" key="19">
    <source>
    </source>
</evidence>
<evidence type="ECO:0000269" key="20">
    <source>
    </source>
</evidence>
<evidence type="ECO:0000269" key="21">
    <source>
    </source>
</evidence>
<evidence type="ECO:0000305" key="22"/>
<keyword id="KW-0037">Angiogenesis</keyword>
<keyword id="KW-1003">Cell membrane</keyword>
<keyword id="KW-0966">Cell projection</keyword>
<keyword id="KW-0217">Developmental protein</keyword>
<keyword id="KW-0221">Differentiation</keyword>
<keyword id="KW-0903">Direct protein sequencing</keyword>
<keyword id="KW-1015">Disulfide bond</keyword>
<keyword id="KW-0325">Glycoprotein</keyword>
<keyword id="KW-0472">Membrane</keyword>
<keyword id="KW-0597">Phosphoprotein</keyword>
<keyword id="KW-0654">Proteoglycan</keyword>
<keyword id="KW-1185">Reference proteome</keyword>
<keyword id="KW-0677">Repeat</keyword>
<keyword id="KW-0732">Signal</keyword>
<keyword id="KW-0797">Tissue remodeling</keyword>
<keyword id="KW-0807">Transducer</keyword>
<keyword id="KW-0812">Transmembrane</keyword>
<keyword id="KW-1133">Transmembrane helix</keyword>
<proteinExistence type="evidence at protein level"/>
<feature type="signal peptide" evidence="15">
    <location>
        <begin position="1"/>
        <end position="29"/>
    </location>
</feature>
<feature type="chain" id="PRO_0000026695" description="Chondroitin sulfate proteoglycan 4">
    <location>
        <begin position="30"/>
        <end position="2326"/>
    </location>
</feature>
<feature type="topological domain" description="Extracellular" evidence="15">
    <location>
        <begin position="30"/>
        <end position="2225"/>
    </location>
</feature>
<feature type="transmembrane region" description="Helical" evidence="3">
    <location>
        <begin position="2226"/>
        <end position="2250"/>
    </location>
</feature>
<feature type="topological domain" description="Cytoplasmic" evidence="15">
    <location>
        <begin position="2251"/>
        <end position="2326"/>
    </location>
</feature>
<feature type="domain" description="Laminin G-like 1" evidence="4">
    <location>
        <begin position="30"/>
        <end position="193"/>
    </location>
</feature>
<feature type="domain" description="Laminin G-like 2" evidence="4">
    <location>
        <begin position="203"/>
        <end position="381"/>
    </location>
</feature>
<feature type="repeat" description="CSPG 1" evidence="5 11">
    <location>
        <begin position="429"/>
        <end position="524"/>
    </location>
</feature>
<feature type="repeat" description="CSPG 2" evidence="5 11">
    <location>
        <begin position="554"/>
        <end position="646"/>
    </location>
</feature>
<feature type="repeat" description="CSPG 3" evidence="5 11">
    <location>
        <begin position="663"/>
        <end position="765"/>
    </location>
</feature>
<feature type="repeat" description="CSPG 4" evidence="5 11">
    <location>
        <begin position="784"/>
        <end position="882"/>
    </location>
</feature>
<feature type="repeat" description="CSPG 5" evidence="5 11">
    <location>
        <begin position="902"/>
        <end position="993"/>
    </location>
</feature>
<feature type="repeat" description="CSPG 6" evidence="5 11">
    <location>
        <begin position="1022"/>
        <end position="1114"/>
    </location>
</feature>
<feature type="repeat" description="CSPG 7" evidence="5 11">
    <location>
        <begin position="1130"/>
        <end position="1220"/>
    </location>
</feature>
<feature type="repeat" description="CSPG 8" evidence="5 11">
    <location>
        <begin position="1242"/>
        <end position="1341"/>
    </location>
</feature>
<feature type="repeat" description="CSPG 9" evidence="5 11">
    <location>
        <begin position="1360"/>
        <end position="1453"/>
    </location>
</feature>
<feature type="repeat" description="CSPG 10" evidence="5 11">
    <location>
        <begin position="1477"/>
        <end position="1567"/>
    </location>
</feature>
<feature type="repeat" description="CSPG 11" evidence="5 11">
    <location>
        <begin position="1585"/>
        <end position="1683"/>
    </location>
</feature>
<feature type="repeat" description="CSPG 12" evidence="5 11">
    <location>
        <begin position="1708"/>
        <end position="1807"/>
    </location>
</feature>
<feature type="repeat" description="CSPG 13" evidence="5 11">
    <location>
        <begin position="1836"/>
        <end position="1928"/>
    </location>
</feature>
<feature type="repeat" description="CSPG 14" evidence="5 11">
    <location>
        <begin position="1945"/>
        <end position="2033"/>
    </location>
</feature>
<feature type="repeat" description="CSPG 15" evidence="5 11">
    <location>
        <begin position="2042"/>
        <end position="2151"/>
    </location>
</feature>
<feature type="region of interest" description="Globular or compact configuration stabilized by disulfide bonds">
    <location>
        <begin position="30"/>
        <end position="640"/>
    </location>
</feature>
<feature type="region of interest" description="Neurite growth inhibition">
    <location>
        <begin position="30"/>
        <end position="640"/>
    </location>
</feature>
<feature type="region of interest" description="Interaction with COL6A2">
    <location>
        <begin position="575"/>
        <end position="1044"/>
    </location>
</feature>
<feature type="region of interest" description="Interaction with COL5A1">
    <location>
        <begin position="632"/>
        <end position="1450"/>
    </location>
</feature>
<feature type="region of interest" description="Neurite growth inhibition">
    <location>
        <begin position="1590"/>
        <end position="2225"/>
    </location>
</feature>
<feature type="region of interest" description="Cysteine-containing">
    <location>
        <begin position="1591"/>
        <end position="2225"/>
    </location>
</feature>
<feature type="region of interest" description="Disordered" evidence="6">
    <location>
        <begin position="2187"/>
        <end position="2210"/>
    </location>
</feature>
<feature type="short sequence motif" description="PDZ-binding">
    <location>
        <begin position="2324"/>
        <end position="2326"/>
    </location>
</feature>
<feature type="compositionally biased region" description="Polar residues" evidence="6">
    <location>
        <begin position="2195"/>
        <end position="2210"/>
    </location>
</feature>
<feature type="modified residue" description="Phosphothreonine; by PKC/PRKCA" evidence="14">
    <location>
        <position position="2256"/>
    </location>
</feature>
<feature type="glycosylation site" description="N-linked (GlcNAc...) asparagine" evidence="3">
    <location>
        <position position="130"/>
    </location>
</feature>
<feature type="glycosylation site" description="N-linked (GlcNAc...) asparagine" evidence="3">
    <location>
        <position position="349"/>
    </location>
</feature>
<feature type="glycosylation site" description="N-linked (GlcNAc...) asparagine" evidence="3">
    <location>
        <position position="428"/>
    </location>
</feature>
<feature type="glycosylation site" description="N-linked (GlcNAc...) asparagine" evidence="3">
    <location>
        <position position="686"/>
    </location>
</feature>
<feature type="glycosylation site" description="N-linked (GlcNAc...) asparagine" evidence="3">
    <location>
        <position position="773"/>
    </location>
</feature>
<feature type="glycosylation site" description="O-linked (Xyl...) (chondroitin sulfate) serine" evidence="10">
    <location>
        <position position="999"/>
    </location>
</feature>
<feature type="glycosylation site" description="N-linked (GlcNAc...) asparagine" evidence="3">
    <location>
        <position position="1135"/>
    </location>
</feature>
<feature type="glycosylation site" description="N-linked (GlcNAc...) asparagine" evidence="3">
    <location>
        <position position="1206"/>
    </location>
</feature>
<feature type="glycosylation site" description="N-linked (GlcNAc...) asparagine" evidence="3">
    <location>
        <position position="1368"/>
    </location>
</feature>
<feature type="glycosylation site" description="N-linked (GlcNAc...) asparagine" evidence="3">
    <location>
        <position position="1453"/>
    </location>
</feature>
<feature type="glycosylation site" description="N-linked (GlcNAc...) asparagine" evidence="3">
    <location>
        <position position="1649"/>
    </location>
</feature>
<feature type="glycosylation site" description="N-linked (GlcNAc...) asparagine" evidence="3">
    <location>
        <position position="1913"/>
    </location>
</feature>
<feature type="glycosylation site" description="N-linked (GlcNAc...) asparagine" evidence="3">
    <location>
        <position position="2020"/>
    </location>
</feature>
<feature type="glycosylation site" description="N-linked (GlcNAc...) asparagine" evidence="3">
    <location>
        <position position="2038"/>
    </location>
</feature>
<feature type="glycosylation site" description="N-linked (GlcNAc...) asparagine" evidence="3">
    <location>
        <position position="2044"/>
    </location>
</feature>
<feature type="glycosylation site" description="N-linked (GlcNAc...) asparagine" evidence="3">
    <location>
        <position position="2079"/>
    </location>
</feature>
<feature type="disulfide bond" evidence="4">
    <location>
        <begin position="170"/>
        <end position="193"/>
    </location>
</feature>
<feature type="disulfide bond" evidence="4">
    <location>
        <begin position="355"/>
        <end position="381"/>
    </location>
</feature>
<feature type="mutagenesis site" description="No chondroitin sulfate attachment. Loss of localization to the retraction fibers." evidence="10">
    <original>S</original>
    <variation>A</variation>
    <location>
        <position position="999"/>
    </location>
</feature>
<feature type="mutagenesis site" description="No effect on chondroitin sulfate attachment." evidence="10">
    <original>S</original>
    <variation>A</variation>
    <location>
        <position position="1342"/>
    </location>
</feature>
<feature type="mutagenesis site" description="Localized to the lamellipodia. Increases cell motility independently of PRKCA activation." evidence="14">
    <original>T</original>
    <variation>E</variation>
    <location>
        <position position="2256"/>
    </location>
</feature>
<feature type="mutagenesis site" description="Apically localized. Loss of PRKCA-dependent cell motility." evidence="14">
    <original>T</original>
    <variation>V</variation>
    <location>
        <position position="2256"/>
    </location>
</feature>
<feature type="mutagenesis site" description="Behaves as wild-type." evidence="14">
    <original>T</original>
    <variation>E</variation>
    <location>
        <position position="2265"/>
    </location>
</feature>
<feature type="mutagenesis site" description="Behaves as wild-type." evidence="14">
    <original>T</original>
    <variation>V</variation>
    <location>
        <position position="2265"/>
    </location>
</feature>
<feature type="mutagenesis site" description="Behaves as wild-type." evidence="14">
    <original>T</original>
    <variation>E</variation>
    <location>
        <position position="2278"/>
    </location>
</feature>
<feature type="mutagenesis site" description="Behaves as wild-type." evidence="14">
    <original>T</original>
    <variation>V</variation>
    <location>
        <position position="2278"/>
    </location>
</feature>
<feature type="sequence conflict" description="In Ref. 3; AA sequence." evidence="22" ref="3">
    <original>LG</original>
    <variation>FP</variation>
    <location>
        <begin position="1391"/>
        <end position="1392"/>
    </location>
</feature>
<name>CSPG4_RAT</name>
<accession>Q00657</accession>
<protein>
    <recommendedName>
        <fullName>Chondroitin sulfate proteoglycan 4</fullName>
    </recommendedName>
    <alternativeName>
        <fullName>Chondroitin sulfate proteoglycan NG2</fullName>
    </alternativeName>
    <alternativeName>
        <fullName>HSN tumor-specific antigen</fullName>
    </alternativeName>
</protein>